<accession>Q68RJ7</accession>
<protein>
    <recommendedName>
        <fullName>Neuronal acetylcholine receptor subunit alpha-9-II</fullName>
    </recommendedName>
    <alternativeName>
        <fullName>Nicotinic acetylcholine receptor subunit alpha-9-II</fullName>
        <shortName>NACHR alpha-9-II</shortName>
    </alternativeName>
</protein>
<keyword id="KW-1003">Cell membrane</keyword>
<keyword id="KW-1015">Disulfide bond</keyword>
<keyword id="KW-0325">Glycoprotein</keyword>
<keyword id="KW-0407">Ion channel</keyword>
<keyword id="KW-0406">Ion transport</keyword>
<keyword id="KW-1071">Ligand-gated ion channel</keyword>
<keyword id="KW-0472">Membrane</keyword>
<keyword id="KW-0628">Postsynaptic cell membrane</keyword>
<keyword id="KW-0675">Receptor</keyword>
<keyword id="KW-0732">Signal</keyword>
<keyword id="KW-0770">Synapse</keyword>
<keyword id="KW-0812">Transmembrane</keyword>
<keyword id="KW-1133">Transmembrane helix</keyword>
<keyword id="KW-0813">Transport</keyword>
<dbReference type="EMBL" id="AY611482">
    <property type="protein sequence ID" value="AAT45203.1"/>
    <property type="molecule type" value="mRNA"/>
</dbReference>
<dbReference type="RefSeq" id="NP_001117991.1">
    <property type="nucleotide sequence ID" value="NM_001124519.1"/>
</dbReference>
<dbReference type="SMR" id="Q68RJ7"/>
<dbReference type="Ensembl" id="ENSOMYT00000009003.2">
    <property type="protein sequence ID" value="ENSOMYP00000008106.1"/>
    <property type="gene ID" value="ENSOMYG00000004143.2"/>
</dbReference>
<dbReference type="GeneID" id="100136255"/>
<dbReference type="KEGG" id="omy:100136255"/>
<dbReference type="CTD" id="55584"/>
<dbReference type="GeneTree" id="ENSGT00940000156077"/>
<dbReference type="OrthoDB" id="5975154at2759"/>
<dbReference type="Proteomes" id="UP000694395">
    <property type="component" value="Chromosome 14"/>
</dbReference>
<dbReference type="GO" id="GO:0045211">
    <property type="term" value="C:postsynaptic membrane"/>
    <property type="evidence" value="ECO:0007669"/>
    <property type="project" value="UniProtKB-SubCell"/>
</dbReference>
<dbReference type="GO" id="GO:0022848">
    <property type="term" value="F:acetylcholine-gated monoatomic cation-selective channel activity"/>
    <property type="evidence" value="ECO:0007669"/>
    <property type="project" value="InterPro"/>
</dbReference>
<dbReference type="GO" id="GO:0004888">
    <property type="term" value="F:transmembrane signaling receptor activity"/>
    <property type="evidence" value="ECO:0007669"/>
    <property type="project" value="InterPro"/>
</dbReference>
<dbReference type="CDD" id="cd19022">
    <property type="entry name" value="LGIC_ECD_nAChR_A9"/>
    <property type="match status" value="1"/>
</dbReference>
<dbReference type="CDD" id="cd19051">
    <property type="entry name" value="LGIC_TM_cation"/>
    <property type="match status" value="1"/>
</dbReference>
<dbReference type="FunFam" id="1.20.58.390:FF:000009">
    <property type="entry name" value="Cholinergic receptor nicotinic alpha 9 subunit"/>
    <property type="match status" value="1"/>
</dbReference>
<dbReference type="FunFam" id="1.20.58.390:FF:000053">
    <property type="entry name" value="Neuronal acetylcholine receptor subunit alpha-9"/>
    <property type="match status" value="1"/>
</dbReference>
<dbReference type="FunFam" id="2.70.170.10:FF:000010">
    <property type="entry name" value="neuronal acetylcholine receptor subunit alpha-9"/>
    <property type="match status" value="1"/>
</dbReference>
<dbReference type="Gene3D" id="2.70.170.10">
    <property type="entry name" value="Neurotransmitter-gated ion-channel ligand-binding domain"/>
    <property type="match status" value="1"/>
</dbReference>
<dbReference type="Gene3D" id="1.20.58.390">
    <property type="entry name" value="Neurotransmitter-gated ion-channel transmembrane domain"/>
    <property type="match status" value="2"/>
</dbReference>
<dbReference type="InterPro" id="IPR006202">
    <property type="entry name" value="Neur_chan_lig-bd"/>
</dbReference>
<dbReference type="InterPro" id="IPR036734">
    <property type="entry name" value="Neur_chan_lig-bd_sf"/>
</dbReference>
<dbReference type="InterPro" id="IPR006201">
    <property type="entry name" value="Neur_channel"/>
</dbReference>
<dbReference type="InterPro" id="IPR036719">
    <property type="entry name" value="Neuro-gated_channel_TM_sf"/>
</dbReference>
<dbReference type="InterPro" id="IPR038050">
    <property type="entry name" value="Neuro_actylchol_rec"/>
</dbReference>
<dbReference type="InterPro" id="IPR006029">
    <property type="entry name" value="Neurotrans-gated_channel_TM"/>
</dbReference>
<dbReference type="InterPro" id="IPR018000">
    <property type="entry name" value="Neurotransmitter_ion_chnl_CS"/>
</dbReference>
<dbReference type="InterPro" id="IPR002394">
    <property type="entry name" value="Nicotinic_acetylcholine_rcpt"/>
</dbReference>
<dbReference type="NCBIfam" id="TIGR00860">
    <property type="entry name" value="LIC"/>
    <property type="match status" value="1"/>
</dbReference>
<dbReference type="PANTHER" id="PTHR18945">
    <property type="entry name" value="NEUROTRANSMITTER GATED ION CHANNEL"/>
    <property type="match status" value="1"/>
</dbReference>
<dbReference type="Pfam" id="PF02931">
    <property type="entry name" value="Neur_chan_LBD"/>
    <property type="match status" value="1"/>
</dbReference>
<dbReference type="Pfam" id="PF02932">
    <property type="entry name" value="Neur_chan_memb"/>
    <property type="match status" value="1"/>
</dbReference>
<dbReference type="PRINTS" id="PR00254">
    <property type="entry name" value="NICOTINICR"/>
</dbReference>
<dbReference type="PRINTS" id="PR00252">
    <property type="entry name" value="NRIONCHANNEL"/>
</dbReference>
<dbReference type="SUPFAM" id="SSF90112">
    <property type="entry name" value="Neurotransmitter-gated ion-channel transmembrane pore"/>
    <property type="match status" value="1"/>
</dbReference>
<dbReference type="SUPFAM" id="SSF63712">
    <property type="entry name" value="Nicotinic receptor ligand binding domain-like"/>
    <property type="match status" value="1"/>
</dbReference>
<dbReference type="PROSITE" id="PS00236">
    <property type="entry name" value="NEUROTR_ION_CHANNEL"/>
    <property type="match status" value="1"/>
</dbReference>
<evidence type="ECO:0000250" key="1"/>
<evidence type="ECO:0000255" key="2"/>
<evidence type="ECO:0000256" key="3">
    <source>
        <dbReference type="SAM" id="MobiDB-lite"/>
    </source>
</evidence>
<evidence type="ECO:0000269" key="4">
    <source>
    </source>
</evidence>
<evidence type="ECO:0000305" key="5"/>
<organism>
    <name type="scientific">Oncorhynchus mykiss</name>
    <name type="common">Rainbow trout</name>
    <name type="synonym">Salmo gairdneri</name>
    <dbReference type="NCBI Taxonomy" id="8022"/>
    <lineage>
        <taxon>Eukaryota</taxon>
        <taxon>Metazoa</taxon>
        <taxon>Chordata</taxon>
        <taxon>Craniata</taxon>
        <taxon>Vertebrata</taxon>
        <taxon>Euteleostomi</taxon>
        <taxon>Actinopterygii</taxon>
        <taxon>Neopterygii</taxon>
        <taxon>Teleostei</taxon>
        <taxon>Protacanthopterygii</taxon>
        <taxon>Salmoniformes</taxon>
        <taxon>Salmonidae</taxon>
        <taxon>Salmoninae</taxon>
        <taxon>Oncorhynchus</taxon>
    </lineage>
</organism>
<proteinExistence type="evidence at transcript level"/>
<name>ACH92_ONCMY</name>
<comment type="subcellular location">
    <subcellularLocation>
        <location evidence="5">Postsynaptic cell membrane</location>
        <topology evidence="5">Multi-pass membrane protein</topology>
    </subcellularLocation>
    <subcellularLocation>
        <location evidence="5">Cell membrane</location>
        <topology evidence="5">Multi-pass membrane protein</topology>
    </subcellularLocation>
</comment>
<comment type="tissue specificity">
    <text evidence="4">Expressed in the brain, liver, olfactory mucosa, pituitary gland and hair cells of the saccule.</text>
</comment>
<comment type="similarity">
    <text evidence="5">Belongs to the ligand-gated ion channel (TC 1.A.9) family. Acetylcholine receptor (TC 1.A.9.1) subfamily.</text>
</comment>
<reference key="1">
    <citation type="journal article" date="2004" name="Neuroscience">
        <title>Cloning and characterization of alpha9 subunits of the nicotinic acetylcholine receptor expressed by saccular hair cells of the rainbow trout (Oncorhynchus mykiss).</title>
        <authorList>
            <person name="Drescher D.G."/>
            <person name="Ramakrishnan N.A."/>
            <person name="Drescher M.J."/>
            <person name="Chun W."/>
            <person name="Wang X."/>
            <person name="Myers S.F."/>
            <person name="Green G.E."/>
            <person name="Sadrazodi K."/>
            <person name="Karadaghy A.A."/>
            <person name="Poopat N."/>
            <person name="Karpenko A.N."/>
            <person name="Khan K.M."/>
            <person name="Hatfield J.S."/>
        </authorList>
    </citation>
    <scope>NUCLEOTIDE SEQUENCE [MRNA]</scope>
    <scope>TISSUE SPECIFICITY</scope>
    <source>
        <tissue>Saccule</tissue>
    </source>
</reference>
<feature type="signal peptide" evidence="2">
    <location>
        <begin position="1"/>
        <end position="20"/>
    </location>
</feature>
<feature type="chain" id="PRO_0000000375" description="Neuronal acetylcholine receptor subunit alpha-9-II">
    <location>
        <begin position="21"/>
        <end position="550"/>
    </location>
</feature>
<feature type="topological domain" description="Extracellular" evidence="2">
    <location>
        <begin position="21"/>
        <end position="233"/>
    </location>
</feature>
<feature type="transmembrane region" description="Helical" evidence="2">
    <location>
        <begin position="234"/>
        <end position="254"/>
    </location>
</feature>
<feature type="transmembrane region" description="Helical" evidence="2">
    <location>
        <begin position="264"/>
        <end position="284"/>
    </location>
</feature>
<feature type="transmembrane region" description="Helical" evidence="2">
    <location>
        <begin position="298"/>
        <end position="318"/>
    </location>
</feature>
<feature type="topological domain" description="Cytoplasmic" evidence="2">
    <location>
        <begin position="319"/>
        <end position="528"/>
    </location>
</feature>
<feature type="transmembrane region" description="Helical" evidence="2">
    <location>
        <begin position="529"/>
        <end position="549"/>
    </location>
</feature>
<feature type="region of interest" description="Disordered" evidence="3">
    <location>
        <begin position="357"/>
        <end position="439"/>
    </location>
</feature>
<feature type="compositionally biased region" description="Low complexity" evidence="3">
    <location>
        <begin position="358"/>
        <end position="367"/>
    </location>
</feature>
<feature type="compositionally biased region" description="Basic residues" evidence="3">
    <location>
        <begin position="413"/>
        <end position="422"/>
    </location>
</feature>
<feature type="glycosylation site" description="N-linked (GlcNAc...) asparagine" evidence="2">
    <location>
        <position position="52"/>
    </location>
</feature>
<feature type="glycosylation site" description="N-linked (GlcNAc...) asparagine" evidence="2">
    <location>
        <position position="165"/>
    </location>
</feature>
<feature type="disulfide bond" evidence="1">
    <location>
        <begin position="150"/>
        <end position="164"/>
    </location>
</feature>
<feature type="disulfide bond" description="Associated with receptor activation" evidence="1">
    <location>
        <begin position="214"/>
        <end position="215"/>
    </location>
</feature>
<sequence>MRKMVPVVCFATMLLQVAHSAQGRYAQQLLTDLMENYSNALRPVEDTDKALNVTLQITLSQIKDMDERNQVLIAYLWIRQTWHDAYLRWNKEDYDGLEVIRIPSSLVWRPDLVLYNKADDDFSGPLDTNVVLRYNGEITWDAPAITKSSCVVDVSYFPFDSQECNLTFGSWTYNGNQVDIAMGMDSGDLSDFVENVEWECHGMPATKNVIMYGCCSDPYPDITYTVLLQRRSSFYIFNLLLPCFLISFLAPLGFYLPADSGEKVSLGVTVLLALTVFQLMVAESMPPSESVPLIGKYYIATMTMITASTALTIFIMNIHFCGAEAKPVPHWAKVLIIDYMSKIFFVYEVGENCATATSSSSSSSSSSHFGQDDVHQPNFSSHRQANGKPGGNSGRENQYRHKNPRPQTPGPQRHPKPRHQHHITRDEKNHLSSSKYEGFESNRNLPLGDCCKEAPPCCPEDEKTAVVAAAVASVTFGPCVFCSHGSSLPGVDSKLVRNVEYIANCFREQRATCAKGAEWKRVAKVMDRFFMWIFFIMVFLMSILIIGKAP</sequence>